<keyword id="KW-0067">ATP-binding</keyword>
<keyword id="KW-0963">Cytoplasm</keyword>
<keyword id="KW-0509">mRNA transport</keyword>
<keyword id="KW-0547">Nucleotide-binding</keyword>
<keyword id="KW-0539">Nucleus</keyword>
<keyword id="KW-0597">Phosphoprotein</keyword>
<keyword id="KW-1185">Reference proteome</keyword>
<keyword id="KW-0677">Repeat</keyword>
<keyword id="KW-0813">Transport</keyword>
<protein>
    <recommendedName>
        <fullName>mRNA export factor elf1</fullName>
    </recommendedName>
</protein>
<reference key="1">
    <citation type="journal article" date="2002" name="J. Biol. Chem.">
        <title>Elf1p, a member of the ABC class of ATPases, functions as a mRNA export factor in Schizosacchromyces pombe.</title>
        <authorList>
            <person name="Kozak L."/>
            <person name="Gopal G."/>
            <person name="Yoon J.H."/>
            <person name="Sauna Z.E."/>
            <person name="Ambudkar S.V."/>
            <person name="Thakurta A.G."/>
            <person name="Dhar R."/>
        </authorList>
    </citation>
    <scope>NUCLEOTIDE SEQUENCE [GENOMIC DNA]</scope>
    <scope>FUNCTION</scope>
    <scope>SUBCELLULAR LOCATION</scope>
    <scope>MUTAGENESIS OF GLY-731</scope>
</reference>
<reference key="2">
    <citation type="journal article" date="2002" name="Nature">
        <title>The genome sequence of Schizosaccharomyces pombe.</title>
        <authorList>
            <person name="Wood V."/>
            <person name="Gwilliam R."/>
            <person name="Rajandream M.A."/>
            <person name="Lyne M.H."/>
            <person name="Lyne R."/>
            <person name="Stewart A."/>
            <person name="Sgouros J.G."/>
            <person name="Peat N."/>
            <person name="Hayles J."/>
            <person name="Baker S.G."/>
            <person name="Basham D."/>
            <person name="Bowman S."/>
            <person name="Brooks K."/>
            <person name="Brown D."/>
            <person name="Brown S."/>
            <person name="Chillingworth T."/>
            <person name="Churcher C.M."/>
            <person name="Collins M."/>
            <person name="Connor R."/>
            <person name="Cronin A."/>
            <person name="Davis P."/>
            <person name="Feltwell T."/>
            <person name="Fraser A."/>
            <person name="Gentles S."/>
            <person name="Goble A."/>
            <person name="Hamlin N."/>
            <person name="Harris D.E."/>
            <person name="Hidalgo J."/>
            <person name="Hodgson G."/>
            <person name="Holroyd S."/>
            <person name="Hornsby T."/>
            <person name="Howarth S."/>
            <person name="Huckle E.J."/>
            <person name="Hunt S."/>
            <person name="Jagels K."/>
            <person name="James K.D."/>
            <person name="Jones L."/>
            <person name="Jones M."/>
            <person name="Leather S."/>
            <person name="McDonald S."/>
            <person name="McLean J."/>
            <person name="Mooney P."/>
            <person name="Moule S."/>
            <person name="Mungall K.L."/>
            <person name="Murphy L.D."/>
            <person name="Niblett D."/>
            <person name="Odell C."/>
            <person name="Oliver K."/>
            <person name="O'Neil S."/>
            <person name="Pearson D."/>
            <person name="Quail M.A."/>
            <person name="Rabbinowitsch E."/>
            <person name="Rutherford K.M."/>
            <person name="Rutter S."/>
            <person name="Saunders D."/>
            <person name="Seeger K."/>
            <person name="Sharp S."/>
            <person name="Skelton J."/>
            <person name="Simmonds M.N."/>
            <person name="Squares R."/>
            <person name="Squares S."/>
            <person name="Stevens K."/>
            <person name="Taylor K."/>
            <person name="Taylor R.G."/>
            <person name="Tivey A."/>
            <person name="Walsh S.V."/>
            <person name="Warren T."/>
            <person name="Whitehead S."/>
            <person name="Woodward J.R."/>
            <person name="Volckaert G."/>
            <person name="Aert R."/>
            <person name="Robben J."/>
            <person name="Grymonprez B."/>
            <person name="Weltjens I."/>
            <person name="Vanstreels E."/>
            <person name="Rieger M."/>
            <person name="Schaefer M."/>
            <person name="Mueller-Auer S."/>
            <person name="Gabel C."/>
            <person name="Fuchs M."/>
            <person name="Duesterhoeft A."/>
            <person name="Fritzc C."/>
            <person name="Holzer E."/>
            <person name="Moestl D."/>
            <person name="Hilbert H."/>
            <person name="Borzym K."/>
            <person name="Langer I."/>
            <person name="Beck A."/>
            <person name="Lehrach H."/>
            <person name="Reinhardt R."/>
            <person name="Pohl T.M."/>
            <person name="Eger P."/>
            <person name="Zimmermann W."/>
            <person name="Wedler H."/>
            <person name="Wambutt R."/>
            <person name="Purnelle B."/>
            <person name="Goffeau A."/>
            <person name="Cadieu E."/>
            <person name="Dreano S."/>
            <person name="Gloux S."/>
            <person name="Lelaure V."/>
            <person name="Mottier S."/>
            <person name="Galibert F."/>
            <person name="Aves S.J."/>
            <person name="Xiang Z."/>
            <person name="Hunt C."/>
            <person name="Moore K."/>
            <person name="Hurst S.M."/>
            <person name="Lucas M."/>
            <person name="Rochet M."/>
            <person name="Gaillardin C."/>
            <person name="Tallada V.A."/>
            <person name="Garzon A."/>
            <person name="Thode G."/>
            <person name="Daga R.R."/>
            <person name="Cruzado L."/>
            <person name="Jimenez J."/>
            <person name="Sanchez M."/>
            <person name="del Rey F."/>
            <person name="Benito J."/>
            <person name="Dominguez A."/>
            <person name="Revuelta J.L."/>
            <person name="Moreno S."/>
            <person name="Armstrong J."/>
            <person name="Forsburg S.L."/>
            <person name="Cerutti L."/>
            <person name="Lowe T."/>
            <person name="McCombie W.R."/>
            <person name="Paulsen I."/>
            <person name="Potashkin J."/>
            <person name="Shpakovski G.V."/>
            <person name="Ussery D."/>
            <person name="Barrell B.G."/>
            <person name="Nurse P."/>
        </authorList>
    </citation>
    <scope>NUCLEOTIDE SEQUENCE [LARGE SCALE GENOMIC DNA]</scope>
    <source>
        <strain>972 / ATCC 24843</strain>
    </source>
</reference>
<reference key="3">
    <citation type="journal article" date="2008" name="J. Proteome Res.">
        <title>Phosphoproteome analysis of fission yeast.</title>
        <authorList>
            <person name="Wilson-Grady J.T."/>
            <person name="Villen J."/>
            <person name="Gygi S.P."/>
        </authorList>
    </citation>
    <scope>PHOSPHORYLATION [LARGE SCALE ANALYSIS] AT SER-733; SER-1041 AND SER-1053</scope>
    <scope>IDENTIFICATION BY MASS SPECTROMETRY</scope>
</reference>
<feature type="chain" id="PRO_0000093460" description="mRNA export factor elf1">
    <location>
        <begin position="1"/>
        <end position="1057"/>
    </location>
</feature>
<feature type="domain" description="ABC transporter 1" evidence="2">
    <location>
        <begin position="440"/>
        <end position="659"/>
    </location>
</feature>
<feature type="domain" description="ABC transporter 2" evidence="2">
    <location>
        <begin position="692"/>
        <end position="1019"/>
    </location>
</feature>
<feature type="domain" description="Chromo" evidence="1">
    <location>
        <begin position="820"/>
        <end position="869"/>
    </location>
</feature>
<feature type="region of interest" description="Disordered" evidence="3">
    <location>
        <begin position="1020"/>
        <end position="1057"/>
    </location>
</feature>
<feature type="compositionally biased region" description="Basic and acidic residues" evidence="3">
    <location>
        <begin position="1020"/>
        <end position="1036"/>
    </location>
</feature>
<feature type="binding site" evidence="2">
    <location>
        <begin position="477"/>
        <end position="484"/>
    </location>
    <ligand>
        <name>ATP</name>
        <dbReference type="ChEBI" id="CHEBI:30616"/>
        <label>1</label>
    </ligand>
</feature>
<feature type="binding site" evidence="2">
    <location>
        <begin position="726"/>
        <end position="733"/>
    </location>
    <ligand>
        <name>ATP</name>
        <dbReference type="ChEBI" id="CHEBI:30616"/>
        <label>2</label>
    </ligand>
</feature>
<feature type="modified residue" description="Phosphoserine" evidence="5">
    <location>
        <position position="733"/>
    </location>
</feature>
<feature type="modified residue" description="Phosphoserine" evidence="5">
    <location>
        <position position="1041"/>
    </location>
</feature>
<feature type="modified residue" description="Phosphoserine" evidence="5">
    <location>
        <position position="1053"/>
    </location>
</feature>
<feature type="mutagenesis site" description="No mRNA transport." evidence="4">
    <original>G</original>
    <variation>D</variation>
    <location>
        <position position="731"/>
    </location>
</feature>
<evidence type="ECO:0000255" key="1">
    <source>
        <dbReference type="PROSITE-ProRule" id="PRU00053"/>
    </source>
</evidence>
<evidence type="ECO:0000255" key="2">
    <source>
        <dbReference type="PROSITE-ProRule" id="PRU00434"/>
    </source>
</evidence>
<evidence type="ECO:0000256" key="3">
    <source>
        <dbReference type="SAM" id="MobiDB-lite"/>
    </source>
</evidence>
<evidence type="ECO:0000269" key="4">
    <source>
    </source>
</evidence>
<evidence type="ECO:0000269" key="5">
    <source>
    </source>
</evidence>
<evidence type="ECO:0000305" key="6"/>
<proteinExistence type="evidence at protein level"/>
<name>ELF1_SCHPO</name>
<gene>
    <name type="primary">elf1</name>
    <name type="ORF">SPAC3C7.08c</name>
</gene>
<organism>
    <name type="scientific">Schizosaccharomyces pombe (strain 972 / ATCC 24843)</name>
    <name type="common">Fission yeast</name>
    <dbReference type="NCBI Taxonomy" id="284812"/>
    <lineage>
        <taxon>Eukaryota</taxon>
        <taxon>Fungi</taxon>
        <taxon>Dikarya</taxon>
        <taxon>Ascomycota</taxon>
        <taxon>Taphrinomycotina</taxon>
        <taxon>Schizosaccharomycetes</taxon>
        <taxon>Schizosaccharomycetales</taxon>
        <taxon>Schizosaccharomycetaceae</taxon>
        <taxon>Schizosaccharomyces</taxon>
    </lineage>
</organism>
<accession>O14134</accession>
<sequence>MTSSVLIQGYEEDDVLKLLQELLDAETSQSCADVGKKIAQLFSNDNPLVTLKTTGFLDGLERAARNKKSGFHREAAMIGFATVIKNLGTPSEVVFLPYLPTILDSFSDRGEVVRQAAKMAAQALLDCLPAGAVETRLIPSLISYLDDSSIKWPSKVAALQLLGSLASSSPKAVADYMAALIPCIKERMHDTKPEISRAAITCMLNLCSVVENNDIIPHIPKLVDCMAHPETLEACIKDLSATTFVATVESVALAVLVPILKRALAQRSQSMLRLTVIITDNLCKLVPDPAEASDFLPELIPDVERIAQTAAMPEVRALASHALTTLNKAAAAQAAKAANNSEKQALDSACKELREAVLKNTSVPHELANSIIDYVCDALAALYKSNNFDKDKWTSQLGVLYLSPLVGEELASQISSKIYDDLHAFYKSLNSVDGISNLTIEEEELVNTDFSLAYGGRLLLSHTNLHLYRGHRYGVVGHNGCGKSTLLRAIGDYKVENFPSPDEVKTCFVAHSLQGEDTSMAILDFVAQDKALLTMNVTRQEAADALHSVGFTAEMQENPVASLSGGWKMKLELARAMLQKADILLLDEPTNHLDVANIAWLEAYLTSQKNITCLIVSHDSSFLDHVCTDIIHYEGVKNQAKKLGYYQGNLSAFVKVKPEAKSYYTLTATNEKFVFPPPGILTGVRSNTRLILKMTNASYTYPNAKKKSLDNVTVGLSLSSRVAILGPNGAGKSTLIKVLIGEVIPQEGKVFKHPNLRVGYVAQHAFHHLDQHLEKTPSQYIQWRYAGGQDREVSEKESRKLTEEDRAQLQRDITVNGERRRVEALIGRQKLKKSFQYEIKWFGKPHKYNTWVSREILLENGFQKFVQAFDDMESSREGLGFRELIPEDIRAHFEDVGLPGDIADYSPISSLSGGQKVKVVIAACLWNNPQLLVLDEPTNFLDRDALGGLAVAIRDWEGGVVMISHNEEFVSALCPEHWHVEAGKVTGKGKTAVDDGKFEDLSEKDLKKIEAKATKKKKLTRNEIKAKERRARERELAWLQSPKGTEKPKSFFSDDEE</sequence>
<comment type="function">
    <text evidence="4">Has a direct role in the mRNA export process. Appears to act within the rae1 mediated mRNA export pathway.</text>
</comment>
<comment type="subcellular location">
    <subcellularLocation>
        <location evidence="4">Cytoplasm</location>
    </subcellularLocation>
    <subcellularLocation>
        <location evidence="4">Nucleus</location>
    </subcellularLocation>
</comment>
<comment type="similarity">
    <text evidence="6">Belongs to the ABC transporter superfamily. ABCF family. EF3 subfamily.</text>
</comment>
<dbReference type="EMBL" id="CU329670">
    <property type="protein sequence ID" value="CAB16738.1"/>
    <property type="molecule type" value="Genomic_DNA"/>
</dbReference>
<dbReference type="PIR" id="T38694">
    <property type="entry name" value="T38694"/>
</dbReference>
<dbReference type="RefSeq" id="NP_593609.1">
    <property type="nucleotide sequence ID" value="NM_001019040.2"/>
</dbReference>
<dbReference type="SMR" id="O14134"/>
<dbReference type="BioGRID" id="279515">
    <property type="interactions" value="15"/>
</dbReference>
<dbReference type="FunCoup" id="O14134">
    <property type="interactions" value="33"/>
</dbReference>
<dbReference type="STRING" id="284812.O14134"/>
<dbReference type="iPTMnet" id="O14134"/>
<dbReference type="PaxDb" id="4896-SPAC3C7.08c.1"/>
<dbReference type="EnsemblFungi" id="SPAC3C7.08c.1">
    <property type="protein sequence ID" value="SPAC3C7.08c.1:pep"/>
    <property type="gene ID" value="SPAC3C7.08c"/>
</dbReference>
<dbReference type="GeneID" id="2543082"/>
<dbReference type="KEGG" id="spo:2543082"/>
<dbReference type="PomBase" id="SPAC3C7.08c">
    <property type="gene designation" value="elf1"/>
</dbReference>
<dbReference type="VEuPathDB" id="FungiDB:SPAC3C7.08c"/>
<dbReference type="eggNOG" id="KOG0062">
    <property type="taxonomic scope" value="Eukaryota"/>
</dbReference>
<dbReference type="eggNOG" id="KOG1242">
    <property type="taxonomic scope" value="Eukaryota"/>
</dbReference>
<dbReference type="HOGENOM" id="CLU_002848_0_1_1"/>
<dbReference type="InParanoid" id="O14134"/>
<dbReference type="OMA" id="EDHRKFG"/>
<dbReference type="PhylomeDB" id="O14134"/>
<dbReference type="Reactome" id="R-SPO-382556">
    <property type="pathway name" value="ABC-family proteins mediated transport"/>
</dbReference>
<dbReference type="PRO" id="PR:O14134"/>
<dbReference type="Proteomes" id="UP000002485">
    <property type="component" value="Chromosome I"/>
</dbReference>
<dbReference type="GO" id="GO:0005737">
    <property type="term" value="C:cytoplasm"/>
    <property type="evidence" value="ECO:0000314"/>
    <property type="project" value="PomBase"/>
</dbReference>
<dbReference type="GO" id="GO:0005829">
    <property type="term" value="C:cytosol"/>
    <property type="evidence" value="ECO:0007005"/>
    <property type="project" value="PomBase"/>
</dbReference>
<dbReference type="GO" id="GO:0005634">
    <property type="term" value="C:nucleus"/>
    <property type="evidence" value="ECO:0007669"/>
    <property type="project" value="UniProtKB-SubCell"/>
</dbReference>
<dbReference type="GO" id="GO:0005524">
    <property type="term" value="F:ATP binding"/>
    <property type="evidence" value="ECO:0000314"/>
    <property type="project" value="PomBase"/>
</dbReference>
<dbReference type="GO" id="GO:0016887">
    <property type="term" value="F:ATP hydrolysis activity"/>
    <property type="evidence" value="ECO:0000314"/>
    <property type="project" value="PomBase"/>
</dbReference>
<dbReference type="GO" id="GO:0016973">
    <property type="term" value="P:poly(A)+ mRNA export from nucleus"/>
    <property type="evidence" value="ECO:0000315"/>
    <property type="project" value="PomBase"/>
</dbReference>
<dbReference type="CDD" id="cd03221">
    <property type="entry name" value="ABCF_EF-3"/>
    <property type="match status" value="1"/>
</dbReference>
<dbReference type="FunFam" id="1.25.10.10:FF:000076">
    <property type="entry name" value="Elongation factor 3"/>
    <property type="match status" value="1"/>
</dbReference>
<dbReference type="FunFam" id="2.40.50.990:FF:000002">
    <property type="entry name" value="mRNA export factor elf1"/>
    <property type="match status" value="1"/>
</dbReference>
<dbReference type="FunFam" id="3.40.50.300:FF:000193">
    <property type="entry name" value="Probable Elongation factor 3"/>
    <property type="match status" value="1"/>
</dbReference>
<dbReference type="Gene3D" id="2.40.50.990">
    <property type="match status" value="1"/>
</dbReference>
<dbReference type="Gene3D" id="1.25.10.10">
    <property type="entry name" value="Leucine-rich Repeat Variant"/>
    <property type="match status" value="1"/>
</dbReference>
<dbReference type="Gene3D" id="3.40.50.300">
    <property type="entry name" value="P-loop containing nucleotide triphosphate hydrolases"/>
    <property type="match status" value="2"/>
</dbReference>
<dbReference type="InterPro" id="IPR003593">
    <property type="entry name" value="AAA+_ATPase"/>
</dbReference>
<dbReference type="InterPro" id="IPR003439">
    <property type="entry name" value="ABC_transporter-like_ATP-bd"/>
</dbReference>
<dbReference type="InterPro" id="IPR017871">
    <property type="entry name" value="ABC_transporter-like_CS"/>
</dbReference>
<dbReference type="InterPro" id="IPR050611">
    <property type="entry name" value="ABCF_EF3_subfamily"/>
</dbReference>
<dbReference type="InterPro" id="IPR011989">
    <property type="entry name" value="ARM-like"/>
</dbReference>
<dbReference type="InterPro" id="IPR016024">
    <property type="entry name" value="ARM-type_fold"/>
</dbReference>
<dbReference type="InterPro" id="IPR000953">
    <property type="entry name" value="Chromo/chromo_shadow_dom"/>
</dbReference>
<dbReference type="InterPro" id="IPR023780">
    <property type="entry name" value="Chromo_domain"/>
</dbReference>
<dbReference type="InterPro" id="IPR047038">
    <property type="entry name" value="eEF3_chromodomain-like_sf"/>
</dbReference>
<dbReference type="InterPro" id="IPR027417">
    <property type="entry name" value="P-loop_NTPase"/>
</dbReference>
<dbReference type="PANTHER" id="PTHR19211:SF14">
    <property type="entry name" value="ATP-BINDING CASSETTE SUB-FAMILY F MEMBER 1"/>
    <property type="match status" value="1"/>
</dbReference>
<dbReference type="PANTHER" id="PTHR19211">
    <property type="entry name" value="ATP-BINDING TRANSPORT PROTEIN-RELATED"/>
    <property type="match status" value="1"/>
</dbReference>
<dbReference type="Pfam" id="PF00005">
    <property type="entry name" value="ABC_tran"/>
    <property type="match status" value="2"/>
</dbReference>
<dbReference type="Pfam" id="PF00385">
    <property type="entry name" value="Chromo"/>
    <property type="match status" value="1"/>
</dbReference>
<dbReference type="Pfam" id="PF24984">
    <property type="entry name" value="HEAT_EF3_GNC1"/>
    <property type="match status" value="1"/>
</dbReference>
<dbReference type="Pfam" id="PF24987">
    <property type="entry name" value="HEAT_EF3_N"/>
    <property type="match status" value="1"/>
</dbReference>
<dbReference type="SMART" id="SM00382">
    <property type="entry name" value="AAA"/>
    <property type="match status" value="2"/>
</dbReference>
<dbReference type="SMART" id="SM00298">
    <property type="entry name" value="CHROMO"/>
    <property type="match status" value="1"/>
</dbReference>
<dbReference type="SUPFAM" id="SSF48371">
    <property type="entry name" value="ARM repeat"/>
    <property type="match status" value="1"/>
</dbReference>
<dbReference type="SUPFAM" id="SSF52540">
    <property type="entry name" value="P-loop containing nucleoside triphosphate hydrolases"/>
    <property type="match status" value="2"/>
</dbReference>
<dbReference type="PROSITE" id="PS00211">
    <property type="entry name" value="ABC_TRANSPORTER_1"/>
    <property type="match status" value="2"/>
</dbReference>
<dbReference type="PROSITE" id="PS50893">
    <property type="entry name" value="ABC_TRANSPORTER_2"/>
    <property type="match status" value="2"/>
</dbReference>
<dbReference type="PROSITE" id="PS50013">
    <property type="entry name" value="CHROMO_2"/>
    <property type="match status" value="1"/>
</dbReference>